<protein>
    <recommendedName>
        <fullName evidence="1">Holliday junction branch migration complex subunit RuvA</fullName>
    </recommendedName>
</protein>
<accession>Q9CDL2</accession>
<sequence length="197" mass="21167">MFEYLNGKLVKISPTNIVIDVAGIGYLISVANPYAWSALMNTEVKIYVHQVIREDAHSLYGFVNEAEKALFLRLISVSGIGPKSALAIIAAADNEGLITAIDNSDIKYLTKFPGVGKKTAMQMVLDLAGKFDATGTVGISLLDAGPAGNLALEEAIEALQALGYKATELKKIEKKLAQETGLTSEEYIKSALKLMMK</sequence>
<keyword id="KW-0963">Cytoplasm</keyword>
<keyword id="KW-0227">DNA damage</keyword>
<keyword id="KW-0233">DNA recombination</keyword>
<keyword id="KW-0234">DNA repair</keyword>
<keyword id="KW-0238">DNA-binding</keyword>
<keyword id="KW-1185">Reference proteome</keyword>
<reference key="1">
    <citation type="journal article" date="2001" name="Genome Res.">
        <title>The complete genome sequence of the lactic acid bacterium Lactococcus lactis ssp. lactis IL1403.</title>
        <authorList>
            <person name="Bolotin A."/>
            <person name="Wincker P."/>
            <person name="Mauger S."/>
            <person name="Jaillon O."/>
            <person name="Malarme K."/>
            <person name="Weissenbach J."/>
            <person name="Ehrlich S.D."/>
            <person name="Sorokin A."/>
        </authorList>
    </citation>
    <scope>NUCLEOTIDE SEQUENCE [LARGE SCALE GENOMIC DNA]</scope>
    <source>
        <strain>IL1403</strain>
    </source>
</reference>
<gene>
    <name evidence="1" type="primary">ruvA</name>
    <name type="ordered locus">LL2207</name>
    <name type="ORF">L0266</name>
</gene>
<organism>
    <name type="scientific">Lactococcus lactis subsp. lactis (strain IL1403)</name>
    <name type="common">Streptococcus lactis</name>
    <dbReference type="NCBI Taxonomy" id="272623"/>
    <lineage>
        <taxon>Bacteria</taxon>
        <taxon>Bacillati</taxon>
        <taxon>Bacillota</taxon>
        <taxon>Bacilli</taxon>
        <taxon>Lactobacillales</taxon>
        <taxon>Streptococcaceae</taxon>
        <taxon>Lactococcus</taxon>
    </lineage>
</organism>
<name>RUVA_LACLA</name>
<feature type="chain" id="PRO_0000094641" description="Holliday junction branch migration complex subunit RuvA">
    <location>
        <begin position="1"/>
        <end position="197"/>
    </location>
</feature>
<feature type="region of interest" description="Domain I" evidence="1">
    <location>
        <begin position="1"/>
        <end position="63"/>
    </location>
</feature>
<feature type="region of interest" description="Domain II" evidence="1">
    <location>
        <begin position="64"/>
        <end position="142"/>
    </location>
</feature>
<feature type="region of interest" description="Flexible linker" evidence="1">
    <location>
        <begin position="142"/>
        <end position="146"/>
    </location>
</feature>
<feature type="region of interest" description="Domain III" evidence="1">
    <location>
        <begin position="147"/>
        <end position="197"/>
    </location>
</feature>
<dbReference type="EMBL" id="AE005176">
    <property type="protein sequence ID" value="AAK06305.1"/>
    <property type="molecule type" value="Genomic_DNA"/>
</dbReference>
<dbReference type="PIR" id="G86900">
    <property type="entry name" value="G86900"/>
</dbReference>
<dbReference type="RefSeq" id="NP_268364.1">
    <property type="nucleotide sequence ID" value="NC_002662.1"/>
</dbReference>
<dbReference type="RefSeq" id="WP_003131995.1">
    <property type="nucleotide sequence ID" value="NC_002662.1"/>
</dbReference>
<dbReference type="SMR" id="Q9CDL2"/>
<dbReference type="PaxDb" id="272623-L0266"/>
<dbReference type="EnsemblBacteria" id="AAK06305">
    <property type="protein sequence ID" value="AAK06305"/>
    <property type="gene ID" value="L0266"/>
</dbReference>
<dbReference type="GeneID" id="89634552"/>
<dbReference type="KEGG" id="lla:L0266"/>
<dbReference type="PATRIC" id="fig|272623.7.peg.2371"/>
<dbReference type="eggNOG" id="COG0632">
    <property type="taxonomic scope" value="Bacteria"/>
</dbReference>
<dbReference type="HOGENOM" id="CLU_087936_1_0_9"/>
<dbReference type="OrthoDB" id="5293449at2"/>
<dbReference type="Proteomes" id="UP000002196">
    <property type="component" value="Chromosome"/>
</dbReference>
<dbReference type="GO" id="GO:0005737">
    <property type="term" value="C:cytoplasm"/>
    <property type="evidence" value="ECO:0007669"/>
    <property type="project" value="UniProtKB-SubCell"/>
</dbReference>
<dbReference type="GO" id="GO:0009379">
    <property type="term" value="C:Holliday junction helicase complex"/>
    <property type="evidence" value="ECO:0007669"/>
    <property type="project" value="InterPro"/>
</dbReference>
<dbReference type="GO" id="GO:0048476">
    <property type="term" value="C:Holliday junction resolvase complex"/>
    <property type="evidence" value="ECO:0007669"/>
    <property type="project" value="UniProtKB-UniRule"/>
</dbReference>
<dbReference type="GO" id="GO:0005524">
    <property type="term" value="F:ATP binding"/>
    <property type="evidence" value="ECO:0007669"/>
    <property type="project" value="InterPro"/>
</dbReference>
<dbReference type="GO" id="GO:0000400">
    <property type="term" value="F:four-way junction DNA binding"/>
    <property type="evidence" value="ECO:0007669"/>
    <property type="project" value="UniProtKB-UniRule"/>
</dbReference>
<dbReference type="GO" id="GO:0009378">
    <property type="term" value="F:four-way junction helicase activity"/>
    <property type="evidence" value="ECO:0007669"/>
    <property type="project" value="InterPro"/>
</dbReference>
<dbReference type="GO" id="GO:0006310">
    <property type="term" value="P:DNA recombination"/>
    <property type="evidence" value="ECO:0007669"/>
    <property type="project" value="UniProtKB-UniRule"/>
</dbReference>
<dbReference type="GO" id="GO:0006281">
    <property type="term" value="P:DNA repair"/>
    <property type="evidence" value="ECO:0007669"/>
    <property type="project" value="UniProtKB-UniRule"/>
</dbReference>
<dbReference type="CDD" id="cd14332">
    <property type="entry name" value="UBA_RuvA_C"/>
    <property type="match status" value="1"/>
</dbReference>
<dbReference type="Gene3D" id="1.10.150.20">
    <property type="entry name" value="5' to 3' exonuclease, C-terminal subdomain"/>
    <property type="match status" value="1"/>
</dbReference>
<dbReference type="Gene3D" id="1.10.8.10">
    <property type="entry name" value="DNA helicase RuvA subunit, C-terminal domain"/>
    <property type="match status" value="1"/>
</dbReference>
<dbReference type="Gene3D" id="2.40.50.140">
    <property type="entry name" value="Nucleic acid-binding proteins"/>
    <property type="match status" value="1"/>
</dbReference>
<dbReference type="HAMAP" id="MF_00031">
    <property type="entry name" value="DNA_HJ_migration_RuvA"/>
    <property type="match status" value="1"/>
</dbReference>
<dbReference type="InterPro" id="IPR013849">
    <property type="entry name" value="DNA_helicase_Holl-junc_RuvA_I"/>
</dbReference>
<dbReference type="InterPro" id="IPR003583">
    <property type="entry name" value="Hlx-hairpin-Hlx_DNA-bd_motif"/>
</dbReference>
<dbReference type="InterPro" id="IPR012340">
    <property type="entry name" value="NA-bd_OB-fold"/>
</dbReference>
<dbReference type="InterPro" id="IPR000085">
    <property type="entry name" value="RuvA"/>
</dbReference>
<dbReference type="InterPro" id="IPR010994">
    <property type="entry name" value="RuvA_2-like"/>
</dbReference>
<dbReference type="InterPro" id="IPR011114">
    <property type="entry name" value="RuvA_C"/>
</dbReference>
<dbReference type="InterPro" id="IPR036267">
    <property type="entry name" value="RuvA_C_sf"/>
</dbReference>
<dbReference type="NCBIfam" id="TIGR00084">
    <property type="entry name" value="ruvA"/>
    <property type="match status" value="1"/>
</dbReference>
<dbReference type="Pfam" id="PF14520">
    <property type="entry name" value="HHH_5"/>
    <property type="match status" value="1"/>
</dbReference>
<dbReference type="Pfam" id="PF07499">
    <property type="entry name" value="RuvA_C"/>
    <property type="match status" value="1"/>
</dbReference>
<dbReference type="Pfam" id="PF01330">
    <property type="entry name" value="RuvA_N"/>
    <property type="match status" value="1"/>
</dbReference>
<dbReference type="SMART" id="SM00278">
    <property type="entry name" value="HhH1"/>
    <property type="match status" value="2"/>
</dbReference>
<dbReference type="SUPFAM" id="SSF46929">
    <property type="entry name" value="DNA helicase RuvA subunit, C-terminal domain"/>
    <property type="match status" value="1"/>
</dbReference>
<dbReference type="SUPFAM" id="SSF50249">
    <property type="entry name" value="Nucleic acid-binding proteins"/>
    <property type="match status" value="1"/>
</dbReference>
<dbReference type="SUPFAM" id="SSF47781">
    <property type="entry name" value="RuvA domain 2-like"/>
    <property type="match status" value="1"/>
</dbReference>
<proteinExistence type="inferred from homology"/>
<evidence type="ECO:0000255" key="1">
    <source>
        <dbReference type="HAMAP-Rule" id="MF_00031"/>
    </source>
</evidence>
<comment type="function">
    <text evidence="1">The RuvA-RuvB-RuvC complex processes Holliday junction (HJ) DNA during genetic recombination and DNA repair, while the RuvA-RuvB complex plays an important role in the rescue of blocked DNA replication forks via replication fork reversal (RFR). RuvA specifically binds to HJ cruciform DNA, conferring on it an open structure. The RuvB hexamer acts as an ATP-dependent pump, pulling dsDNA into and through the RuvAB complex. HJ branch migration allows RuvC to scan DNA until it finds its consensus sequence, where it cleaves and resolves the cruciform DNA.</text>
</comment>
<comment type="subunit">
    <text evidence="1">Homotetramer. Forms an RuvA(8)-RuvB(12)-Holliday junction (HJ) complex. HJ DNA is sandwiched between 2 RuvA tetramers; dsDNA enters through RuvA and exits via RuvB. An RuvB hexamer assembles on each DNA strand where it exits the tetramer. Each RuvB hexamer is contacted by two RuvA subunits (via domain III) on 2 adjacent RuvB subunits; this complex drives branch migration. In the full resolvosome a probable DNA-RuvA(4)-RuvB(12)-RuvC(2) complex forms which resolves the HJ.</text>
</comment>
<comment type="subcellular location">
    <subcellularLocation>
        <location evidence="1">Cytoplasm</location>
    </subcellularLocation>
</comment>
<comment type="domain">
    <text evidence="1">Has three domains with a flexible linker between the domains II and III and assumes an 'L' shape. Domain III is highly mobile and contacts RuvB.</text>
</comment>
<comment type="similarity">
    <text evidence="1">Belongs to the RuvA family.</text>
</comment>